<organism>
    <name type="scientific">Thermotoga sp. (strain RQ2)</name>
    <dbReference type="NCBI Taxonomy" id="126740"/>
    <lineage>
        <taxon>Bacteria</taxon>
        <taxon>Thermotogati</taxon>
        <taxon>Thermotogota</taxon>
        <taxon>Thermotogae</taxon>
        <taxon>Thermotogales</taxon>
        <taxon>Thermotogaceae</taxon>
        <taxon>Thermotoga</taxon>
    </lineage>
</organism>
<feature type="chain" id="PRO_1000097575" description="Queuine tRNA-ribosyltransferase">
    <location>
        <begin position="1"/>
        <end position="369"/>
    </location>
</feature>
<feature type="region of interest" description="RNA binding" evidence="1">
    <location>
        <begin position="242"/>
        <end position="248"/>
    </location>
</feature>
<feature type="region of interest" description="RNA binding; important for wobble base 34 recognition" evidence="1">
    <location>
        <begin position="266"/>
        <end position="270"/>
    </location>
</feature>
<feature type="active site" description="Proton acceptor" evidence="1">
    <location>
        <position position="89"/>
    </location>
</feature>
<feature type="active site" description="Nucleophile" evidence="1">
    <location>
        <position position="261"/>
    </location>
</feature>
<feature type="binding site" evidence="1">
    <location>
        <begin position="89"/>
        <end position="93"/>
    </location>
    <ligand>
        <name>substrate</name>
    </ligand>
</feature>
<feature type="binding site" evidence="1">
    <location>
        <position position="142"/>
    </location>
    <ligand>
        <name>substrate</name>
    </ligand>
</feature>
<feature type="binding site" evidence="1">
    <location>
        <position position="184"/>
    </location>
    <ligand>
        <name>substrate</name>
    </ligand>
</feature>
<feature type="binding site" evidence="1">
    <location>
        <position position="211"/>
    </location>
    <ligand>
        <name>substrate</name>
    </ligand>
</feature>
<feature type="binding site" evidence="1">
    <location>
        <position position="299"/>
    </location>
    <ligand>
        <name>Zn(2+)</name>
        <dbReference type="ChEBI" id="CHEBI:29105"/>
    </ligand>
</feature>
<feature type="binding site" evidence="1">
    <location>
        <position position="301"/>
    </location>
    <ligand>
        <name>Zn(2+)</name>
        <dbReference type="ChEBI" id="CHEBI:29105"/>
    </ligand>
</feature>
<feature type="binding site" evidence="1">
    <location>
        <position position="304"/>
    </location>
    <ligand>
        <name>Zn(2+)</name>
        <dbReference type="ChEBI" id="CHEBI:29105"/>
    </ligand>
</feature>
<feature type="binding site" evidence="1">
    <location>
        <position position="330"/>
    </location>
    <ligand>
        <name>Zn(2+)</name>
        <dbReference type="ChEBI" id="CHEBI:29105"/>
    </ligand>
</feature>
<sequence>MEFEVKKTFGKARLGVMKLHHGAVETPVFMPVGTNANVKLLTPRDLEEAGAEIILSNTFHLMLKPGVEIIKLHRGLHNFMGWKRPILTDSGGFQVFSLPKIRIDDEGVVFRSPIDGSKVFLNPEISMEVQIALGSDICMVFDHCPVPDADYEEVKEATERTYRWALRSKKAFKTENQALFGIVQGGIYPDLRRESALQLTSIGFDGYAIGGLSIGEERSLTLEMTEVTVEFLPEDKPRYFMGGGSPELILELVDRGVDMFDSVFPTRIARHGTALTWNGKLNLKASYNKRSLEPVDERCGCYTCKNFTRSYIHHLFDRGEVLGQILLTIHNINFMISLMKEVRRSIESGTFKELKSKVVEVYSSGGVNV</sequence>
<evidence type="ECO:0000255" key="1">
    <source>
        <dbReference type="HAMAP-Rule" id="MF_00168"/>
    </source>
</evidence>
<protein>
    <recommendedName>
        <fullName evidence="1">Queuine tRNA-ribosyltransferase</fullName>
        <ecNumber evidence="1">2.4.2.29</ecNumber>
    </recommendedName>
    <alternativeName>
        <fullName evidence="1">Guanine insertion enzyme</fullName>
    </alternativeName>
    <alternativeName>
        <fullName evidence="1">tRNA-guanine transglycosylase</fullName>
    </alternativeName>
</protein>
<gene>
    <name evidence="1" type="primary">tgt</name>
    <name type="ordered locus">TRQ2_1224</name>
</gene>
<comment type="function">
    <text evidence="1">Catalyzes the base-exchange of a guanine (G) residue with the queuine precursor 7-aminomethyl-7-deazaguanine (PreQ1) at position 34 (anticodon wobble position) in tRNAs with GU(N) anticodons (tRNA-Asp, -Asn, -His and -Tyr). Catalysis occurs through a double-displacement mechanism. The nucleophile active site attacks the C1' of nucleotide 34 to detach the guanine base from the RNA, forming a covalent enzyme-RNA intermediate. The proton acceptor active site deprotonates the incoming PreQ1, allowing a nucleophilic attack on the C1' of the ribose to form the product. After dissociation, two additional enzymatic reactions on the tRNA convert PreQ1 to queuine (Q), resulting in the hypermodified nucleoside queuosine (7-(((4,5-cis-dihydroxy-2-cyclopenten-1-yl)amino)methyl)-7-deazaguanosine).</text>
</comment>
<comment type="catalytic activity">
    <reaction evidence="1">
        <text>7-aminomethyl-7-carbaguanine + guanosine(34) in tRNA = 7-aminomethyl-7-carbaguanosine(34) in tRNA + guanine</text>
        <dbReference type="Rhea" id="RHEA:24104"/>
        <dbReference type="Rhea" id="RHEA-COMP:10341"/>
        <dbReference type="Rhea" id="RHEA-COMP:10342"/>
        <dbReference type="ChEBI" id="CHEBI:16235"/>
        <dbReference type="ChEBI" id="CHEBI:58703"/>
        <dbReference type="ChEBI" id="CHEBI:74269"/>
        <dbReference type="ChEBI" id="CHEBI:82833"/>
        <dbReference type="EC" id="2.4.2.29"/>
    </reaction>
</comment>
<comment type="cofactor">
    <cofactor evidence="1">
        <name>Zn(2+)</name>
        <dbReference type="ChEBI" id="CHEBI:29105"/>
    </cofactor>
    <text evidence="1">Binds 1 zinc ion per subunit.</text>
</comment>
<comment type="pathway">
    <text evidence="1">tRNA modification; tRNA-queuosine biosynthesis.</text>
</comment>
<comment type="subunit">
    <text evidence="1">Homodimer. Within each dimer, one monomer is responsible for RNA recognition and catalysis, while the other monomer binds to the replacement base PreQ1.</text>
</comment>
<comment type="similarity">
    <text evidence="1">Belongs to the queuine tRNA-ribosyltransferase family.</text>
</comment>
<name>TGT_THESQ</name>
<accession>B1LB70</accession>
<reference key="1">
    <citation type="journal article" date="2011" name="J. Bacteriol.">
        <title>Genome sequence of Thermotoga sp. strain RQ2, a hyperthermophilic bacterium isolated from a geothermally heated region of the seafloor near Ribeira Quente, the Azores.</title>
        <authorList>
            <person name="Swithers K.S."/>
            <person name="DiPippo J.L."/>
            <person name="Bruce D.C."/>
            <person name="Detter C."/>
            <person name="Tapia R."/>
            <person name="Han S."/>
            <person name="Saunders E."/>
            <person name="Goodwin L.A."/>
            <person name="Han J."/>
            <person name="Woyke T."/>
            <person name="Pitluck S."/>
            <person name="Pennacchio L."/>
            <person name="Nolan M."/>
            <person name="Mikhailova N."/>
            <person name="Lykidis A."/>
            <person name="Land M.L."/>
            <person name="Brettin T."/>
            <person name="Stetter K.O."/>
            <person name="Nelson K.E."/>
            <person name="Gogarten J.P."/>
            <person name="Noll K.M."/>
        </authorList>
    </citation>
    <scope>NUCLEOTIDE SEQUENCE [LARGE SCALE GENOMIC DNA]</scope>
    <source>
        <strain>RQ2</strain>
    </source>
</reference>
<keyword id="KW-0328">Glycosyltransferase</keyword>
<keyword id="KW-0479">Metal-binding</keyword>
<keyword id="KW-0671">Queuosine biosynthesis</keyword>
<keyword id="KW-0808">Transferase</keyword>
<keyword id="KW-0819">tRNA processing</keyword>
<keyword id="KW-0862">Zinc</keyword>
<dbReference type="EC" id="2.4.2.29" evidence="1"/>
<dbReference type="EMBL" id="CP000969">
    <property type="protein sequence ID" value="ACB09568.1"/>
    <property type="molecule type" value="Genomic_DNA"/>
</dbReference>
<dbReference type="RefSeq" id="WP_012311017.1">
    <property type="nucleotide sequence ID" value="NC_010483.1"/>
</dbReference>
<dbReference type="SMR" id="B1LB70"/>
<dbReference type="KEGG" id="trq:TRQ2_1224"/>
<dbReference type="HOGENOM" id="CLU_022060_0_1_0"/>
<dbReference type="UniPathway" id="UPA00392"/>
<dbReference type="Proteomes" id="UP000001687">
    <property type="component" value="Chromosome"/>
</dbReference>
<dbReference type="GO" id="GO:0005829">
    <property type="term" value="C:cytosol"/>
    <property type="evidence" value="ECO:0007669"/>
    <property type="project" value="TreeGrafter"/>
</dbReference>
<dbReference type="GO" id="GO:0046872">
    <property type="term" value="F:metal ion binding"/>
    <property type="evidence" value="ECO:0007669"/>
    <property type="project" value="UniProtKB-KW"/>
</dbReference>
<dbReference type="GO" id="GO:0008479">
    <property type="term" value="F:tRNA-guanosine(34) queuine transglycosylase activity"/>
    <property type="evidence" value="ECO:0007669"/>
    <property type="project" value="UniProtKB-UniRule"/>
</dbReference>
<dbReference type="GO" id="GO:0008616">
    <property type="term" value="P:queuosine biosynthetic process"/>
    <property type="evidence" value="ECO:0007669"/>
    <property type="project" value="UniProtKB-UniRule"/>
</dbReference>
<dbReference type="GO" id="GO:0002099">
    <property type="term" value="P:tRNA wobble guanine modification"/>
    <property type="evidence" value="ECO:0007669"/>
    <property type="project" value="TreeGrafter"/>
</dbReference>
<dbReference type="GO" id="GO:0101030">
    <property type="term" value="P:tRNA-guanine transglycosylation"/>
    <property type="evidence" value="ECO:0007669"/>
    <property type="project" value="InterPro"/>
</dbReference>
<dbReference type="FunFam" id="3.20.20.105:FF:000001">
    <property type="entry name" value="Queuine tRNA-ribosyltransferase"/>
    <property type="match status" value="1"/>
</dbReference>
<dbReference type="Gene3D" id="3.20.20.105">
    <property type="entry name" value="Queuine tRNA-ribosyltransferase-like"/>
    <property type="match status" value="1"/>
</dbReference>
<dbReference type="HAMAP" id="MF_00168">
    <property type="entry name" value="Q_tRNA_Tgt"/>
    <property type="match status" value="1"/>
</dbReference>
<dbReference type="InterPro" id="IPR050076">
    <property type="entry name" value="ArchSynthase1/Queuine_TRR"/>
</dbReference>
<dbReference type="InterPro" id="IPR004803">
    <property type="entry name" value="TGT"/>
</dbReference>
<dbReference type="InterPro" id="IPR036511">
    <property type="entry name" value="TGT-like_sf"/>
</dbReference>
<dbReference type="InterPro" id="IPR002616">
    <property type="entry name" value="tRNA_ribo_trans-like"/>
</dbReference>
<dbReference type="NCBIfam" id="TIGR00430">
    <property type="entry name" value="Q_tRNA_tgt"/>
    <property type="match status" value="1"/>
</dbReference>
<dbReference type="NCBIfam" id="TIGR00449">
    <property type="entry name" value="tgt_general"/>
    <property type="match status" value="1"/>
</dbReference>
<dbReference type="PANTHER" id="PTHR46499">
    <property type="entry name" value="QUEUINE TRNA-RIBOSYLTRANSFERASE"/>
    <property type="match status" value="1"/>
</dbReference>
<dbReference type="PANTHER" id="PTHR46499:SF1">
    <property type="entry name" value="QUEUINE TRNA-RIBOSYLTRANSFERASE"/>
    <property type="match status" value="1"/>
</dbReference>
<dbReference type="Pfam" id="PF01702">
    <property type="entry name" value="TGT"/>
    <property type="match status" value="1"/>
</dbReference>
<dbReference type="SUPFAM" id="SSF51713">
    <property type="entry name" value="tRNA-guanine transglycosylase"/>
    <property type="match status" value="1"/>
</dbReference>
<proteinExistence type="inferred from homology"/>